<reference key="1">
    <citation type="journal article" date="2004" name="J. Infect. Dis.">
        <title>Progress toward characterization of the group A Streptococcus metagenome: complete genome sequence of a macrolide-resistant serotype M6 strain.</title>
        <authorList>
            <person name="Banks D.J."/>
            <person name="Porcella S.F."/>
            <person name="Barbian K.D."/>
            <person name="Beres S.B."/>
            <person name="Philips L.E."/>
            <person name="Voyich J.M."/>
            <person name="DeLeo F.R."/>
            <person name="Martin J.M."/>
            <person name="Somerville G.A."/>
            <person name="Musser J.M."/>
        </authorList>
    </citation>
    <scope>NUCLEOTIDE SEQUENCE [LARGE SCALE GENOMIC DNA]</scope>
    <source>
        <strain>ATCC BAA-946 / MGAS10394</strain>
    </source>
</reference>
<organism>
    <name type="scientific">Streptococcus pyogenes serotype M6 (strain ATCC BAA-946 / MGAS10394)</name>
    <dbReference type="NCBI Taxonomy" id="286636"/>
    <lineage>
        <taxon>Bacteria</taxon>
        <taxon>Bacillati</taxon>
        <taxon>Bacillota</taxon>
        <taxon>Bacilli</taxon>
        <taxon>Lactobacillales</taxon>
        <taxon>Streptococcaceae</taxon>
        <taxon>Streptococcus</taxon>
    </lineage>
</organism>
<name>HUTG_STRP6</name>
<gene>
    <name evidence="1" type="primary">hutG</name>
    <name type="ordered locus">M6_Spy1776</name>
</gene>
<evidence type="ECO:0000255" key="1">
    <source>
        <dbReference type="HAMAP-Rule" id="MF_00737"/>
    </source>
</evidence>
<evidence type="ECO:0000305" key="2"/>
<feature type="chain" id="PRO_0000173777" description="Formimidoylglutamase">
    <location>
        <begin position="1"/>
        <end position="328"/>
    </location>
</feature>
<feature type="binding site" evidence="1">
    <location>
        <position position="133"/>
    </location>
    <ligand>
        <name>Mn(2+)</name>
        <dbReference type="ChEBI" id="CHEBI:29035"/>
        <label>1</label>
    </ligand>
</feature>
<feature type="binding site" evidence="1">
    <location>
        <position position="159"/>
    </location>
    <ligand>
        <name>Mn(2+)</name>
        <dbReference type="ChEBI" id="CHEBI:29035"/>
        <label>1</label>
    </ligand>
</feature>
<feature type="binding site" evidence="1">
    <location>
        <position position="159"/>
    </location>
    <ligand>
        <name>Mn(2+)</name>
        <dbReference type="ChEBI" id="CHEBI:29035"/>
        <label>2</label>
    </ligand>
</feature>
<feature type="binding site" evidence="1">
    <location>
        <position position="161"/>
    </location>
    <ligand>
        <name>Mn(2+)</name>
        <dbReference type="ChEBI" id="CHEBI:29035"/>
        <label>2</label>
    </ligand>
</feature>
<feature type="binding site" evidence="1">
    <location>
        <position position="163"/>
    </location>
    <ligand>
        <name>Mn(2+)</name>
        <dbReference type="ChEBI" id="CHEBI:29035"/>
        <label>1</label>
    </ligand>
</feature>
<feature type="binding site" evidence="1">
    <location>
        <position position="253"/>
    </location>
    <ligand>
        <name>Mn(2+)</name>
        <dbReference type="ChEBI" id="CHEBI:29035"/>
        <label>1</label>
    </ligand>
</feature>
<feature type="binding site" evidence="1">
    <location>
        <position position="253"/>
    </location>
    <ligand>
        <name>Mn(2+)</name>
        <dbReference type="ChEBI" id="CHEBI:29035"/>
        <label>2</label>
    </ligand>
</feature>
<feature type="binding site" evidence="1">
    <location>
        <position position="255"/>
    </location>
    <ligand>
        <name>Mn(2+)</name>
        <dbReference type="ChEBI" id="CHEBI:29035"/>
        <label>2</label>
    </ligand>
</feature>
<proteinExistence type="inferred from homology"/>
<dbReference type="EC" id="3.5.3.8" evidence="1"/>
<dbReference type="EMBL" id="CP000003">
    <property type="protein sequence ID" value="AAT87911.1"/>
    <property type="status" value="ALT_INIT"/>
    <property type="molecule type" value="Genomic_DNA"/>
</dbReference>
<dbReference type="RefSeq" id="WP_021340200.1">
    <property type="nucleotide sequence ID" value="NC_006086.1"/>
</dbReference>
<dbReference type="SMR" id="Q5X9K2"/>
<dbReference type="KEGG" id="spa:M6_Spy1776"/>
<dbReference type="HOGENOM" id="CLU_039478_2_0_9"/>
<dbReference type="UniPathway" id="UPA00379">
    <property type="reaction ID" value="UER00552"/>
</dbReference>
<dbReference type="Proteomes" id="UP000001167">
    <property type="component" value="Chromosome"/>
</dbReference>
<dbReference type="GO" id="GO:0008783">
    <property type="term" value="F:agmatinase activity"/>
    <property type="evidence" value="ECO:0007669"/>
    <property type="project" value="TreeGrafter"/>
</dbReference>
<dbReference type="GO" id="GO:0050415">
    <property type="term" value="F:formimidoylglutamase activity"/>
    <property type="evidence" value="ECO:0007669"/>
    <property type="project" value="UniProtKB-UniRule"/>
</dbReference>
<dbReference type="GO" id="GO:0030145">
    <property type="term" value="F:manganese ion binding"/>
    <property type="evidence" value="ECO:0007669"/>
    <property type="project" value="UniProtKB-UniRule"/>
</dbReference>
<dbReference type="GO" id="GO:0019556">
    <property type="term" value="P:L-histidine catabolic process to glutamate and formamide"/>
    <property type="evidence" value="ECO:0007669"/>
    <property type="project" value="UniProtKB-UniPathway"/>
</dbReference>
<dbReference type="GO" id="GO:0019557">
    <property type="term" value="P:L-histidine catabolic process to glutamate and formate"/>
    <property type="evidence" value="ECO:0007669"/>
    <property type="project" value="UniProtKB-UniPathway"/>
</dbReference>
<dbReference type="GO" id="GO:0033389">
    <property type="term" value="P:putrescine biosynthetic process from arginine, via agmatine"/>
    <property type="evidence" value="ECO:0007669"/>
    <property type="project" value="TreeGrafter"/>
</dbReference>
<dbReference type="CDD" id="cd09988">
    <property type="entry name" value="Formimidoylglutamase"/>
    <property type="match status" value="1"/>
</dbReference>
<dbReference type="Gene3D" id="3.40.800.10">
    <property type="entry name" value="Ureohydrolase domain"/>
    <property type="match status" value="1"/>
</dbReference>
<dbReference type="HAMAP" id="MF_00737">
    <property type="entry name" value="Formimidoylglutam"/>
    <property type="match status" value="1"/>
</dbReference>
<dbReference type="InterPro" id="IPR005923">
    <property type="entry name" value="HutG"/>
</dbReference>
<dbReference type="InterPro" id="IPR006035">
    <property type="entry name" value="Ureohydrolase"/>
</dbReference>
<dbReference type="InterPro" id="IPR023696">
    <property type="entry name" value="Ureohydrolase_dom_sf"/>
</dbReference>
<dbReference type="NCBIfam" id="TIGR01227">
    <property type="entry name" value="hutG"/>
    <property type="match status" value="1"/>
</dbReference>
<dbReference type="NCBIfam" id="NF010347">
    <property type="entry name" value="PRK13775.1"/>
    <property type="match status" value="1"/>
</dbReference>
<dbReference type="PANTHER" id="PTHR11358">
    <property type="entry name" value="ARGINASE/AGMATINASE"/>
    <property type="match status" value="1"/>
</dbReference>
<dbReference type="PANTHER" id="PTHR11358:SF35">
    <property type="entry name" value="FORMIMIDOYLGLUTAMASE"/>
    <property type="match status" value="1"/>
</dbReference>
<dbReference type="Pfam" id="PF00491">
    <property type="entry name" value="Arginase"/>
    <property type="match status" value="1"/>
</dbReference>
<dbReference type="PIRSF" id="PIRSF036979">
    <property type="entry name" value="Arginase"/>
    <property type="match status" value="1"/>
</dbReference>
<dbReference type="PRINTS" id="PR00116">
    <property type="entry name" value="ARGINASE"/>
</dbReference>
<dbReference type="SUPFAM" id="SSF52768">
    <property type="entry name" value="Arginase/deacetylase"/>
    <property type="match status" value="1"/>
</dbReference>
<dbReference type="PROSITE" id="PS51409">
    <property type="entry name" value="ARGINASE_2"/>
    <property type="match status" value="1"/>
</dbReference>
<keyword id="KW-0369">Histidine metabolism</keyword>
<keyword id="KW-0378">Hydrolase</keyword>
<keyword id="KW-0464">Manganese</keyword>
<keyword id="KW-0479">Metal-binding</keyword>
<accession>Q5X9K2</accession>
<sequence>MLEDYYPSTTSYYHGGIDDDLYTAKWGMVMTFLDLNDSSLTPFEGTHFALIGFKSDKGVYINNGRVGAVESPAAIRTQLAKFPWHLGNQVMVYDVGNIDGPNRSLEQLQNSLSKAIKRMCDLNLKPIVLGGGHETAYGHYLGLRQSLSPSDDLAVINMDAHFDLRPYDQTGPNSGTGFRQMFDDAVADKRLFKYFVLGIQEHNNNLFLFDFVAKSKGIQFLTGQDIYQMGHQKICRAIDRFLEGQERVYLTIDMDCFSVGAAPGVSAIQSLGVDPNLAVLVLQHIAASGKLVGFDVVEVSPPHDIDNHTANLAATFIFYLVQIMAQHS</sequence>
<comment type="function">
    <text evidence="1">Catalyzes the conversion of N-formimidoyl-L-glutamate to L-glutamate and formamide.</text>
</comment>
<comment type="catalytic activity">
    <reaction evidence="1">
        <text>N-formimidoyl-L-glutamate + H2O = formamide + L-glutamate</text>
        <dbReference type="Rhea" id="RHEA:22492"/>
        <dbReference type="ChEBI" id="CHEBI:15377"/>
        <dbReference type="ChEBI" id="CHEBI:16397"/>
        <dbReference type="ChEBI" id="CHEBI:29985"/>
        <dbReference type="ChEBI" id="CHEBI:58928"/>
        <dbReference type="EC" id="3.5.3.8"/>
    </reaction>
</comment>
<comment type="cofactor">
    <cofactor evidence="1">
        <name>Mn(2+)</name>
        <dbReference type="ChEBI" id="CHEBI:29035"/>
    </cofactor>
    <text evidence="1">Binds 2 manganese ions per subunit.</text>
</comment>
<comment type="pathway">
    <text evidence="1">Amino-acid degradation; L-histidine degradation into L-glutamate; L-glutamate from N-formimidoyl-L-glutamate (hydrolase route): step 1/1.</text>
</comment>
<comment type="similarity">
    <text evidence="1">Belongs to the arginase family.</text>
</comment>
<comment type="sequence caution" evidence="2">
    <conflict type="erroneous initiation">
        <sequence resource="EMBL-CDS" id="AAT87911"/>
    </conflict>
</comment>
<protein>
    <recommendedName>
        <fullName evidence="1">Formimidoylglutamase</fullName>
        <ecNumber evidence="1">3.5.3.8</ecNumber>
    </recommendedName>
    <alternativeName>
        <fullName evidence="1">Formiminoglutamase</fullName>
    </alternativeName>
    <alternativeName>
        <fullName evidence="1">Formiminoglutamate hydrolase</fullName>
    </alternativeName>
</protein>